<name>STC3_RHIME</name>
<organism>
    <name type="scientific">Rhizobium meliloti (strain 1021)</name>
    <name type="common">Ensifer meliloti</name>
    <name type="synonym">Sinorhizobium meliloti</name>
    <dbReference type="NCBI Taxonomy" id="266834"/>
    <lineage>
        <taxon>Bacteria</taxon>
        <taxon>Pseudomonadati</taxon>
        <taxon>Pseudomonadota</taxon>
        <taxon>Alphaproteobacteria</taxon>
        <taxon>Hyphomicrobiales</taxon>
        <taxon>Rhizobiaceae</taxon>
        <taxon>Sinorhizobium/Ensifer group</taxon>
        <taxon>Sinorhizobium</taxon>
    </lineage>
</organism>
<keyword id="KW-0560">Oxidoreductase</keyword>
<keyword id="KW-0614">Plasmid</keyword>
<keyword id="KW-1185">Reference proteome</keyword>
<evidence type="ECO:0000269" key="1">
    <source>
    </source>
</evidence>
<evidence type="ECO:0000269" key="2">
    <source>
    </source>
</evidence>
<evidence type="ECO:0000303" key="3">
    <source>
    </source>
</evidence>
<evidence type="ECO:0000305" key="4"/>
<evidence type="ECO:0000305" key="5">
    <source>
    </source>
</evidence>
<evidence type="ECO:0000305" key="6">
    <source>
    </source>
</evidence>
<evidence type="ECO:0000312" key="7">
    <source>
        <dbReference type="EMBL" id="AAK65060.1"/>
    </source>
</evidence>
<gene>
    <name evidence="3" type="primary">stc3</name>
    <name evidence="4" type="ordered locus">RA0402</name>
    <name evidence="7" type="ORF">SMa0753</name>
</gene>
<accession>Q92ZP7</accession>
<feature type="chain" id="PRO_0000462002" description="Stachydrine N-demethylase reductase subunit Stc3">
    <location>
        <begin position="1"/>
        <end position="230"/>
    </location>
</feature>
<comment type="function">
    <text evidence="1 2 5 6">Reductase involved in the catabolism of stachydrine (L-proline betaine), a source of carbon and nitrogen (PubMed:10689197). Part of a Rieske-type oxygenase system that catalyzes the demethylation of stachydrine to produce N-methyl-L-proline (monomethylproline) (PubMed:22224443). This subunit is probably involved in the transfer of electrons from NAD(P)H to the catalytic subunit Stc2 (Probable).</text>
</comment>
<comment type="subunit">
    <text evidence="5 6">The system is probably composed of an oxygenase subunit (Stc2) and two reductase subunits (Stc3 and Stc4).</text>
</comment>
<comment type="similarity">
    <text evidence="4">Belongs to the non-flavoprotein flavin reductase family.</text>
</comment>
<geneLocation type="plasmid">
    <name>pSymA</name>
    <name>megaplasmid 1</name>
</geneLocation>
<reference evidence="7" key="1">
    <citation type="journal article" date="2001" name="Proc. Natl. Acad. Sci. U.S.A.">
        <title>Nucleotide sequence and predicted functions of the entire Sinorhizobium meliloti pSymA megaplasmid.</title>
        <authorList>
            <person name="Barnett M.J."/>
            <person name="Fisher R.F."/>
            <person name="Jones T."/>
            <person name="Komp C."/>
            <person name="Abola A.P."/>
            <person name="Barloy-Hubler F."/>
            <person name="Bowser L."/>
            <person name="Capela D."/>
            <person name="Galibert F."/>
            <person name="Gouzy J."/>
            <person name="Gurjal M."/>
            <person name="Hong A."/>
            <person name="Huizar L."/>
            <person name="Hyman R.W."/>
            <person name="Kahn D."/>
            <person name="Kahn M.L."/>
            <person name="Kalman S."/>
            <person name="Keating D.H."/>
            <person name="Palm C."/>
            <person name="Peck M.C."/>
            <person name="Surzycki R."/>
            <person name="Wells D.H."/>
            <person name="Yeh K.-C."/>
            <person name="Davis R.W."/>
            <person name="Federspiel N.A."/>
            <person name="Long S.R."/>
        </authorList>
    </citation>
    <scope>NUCLEOTIDE SEQUENCE [LARGE SCALE GENOMIC DNA]</scope>
    <source>
        <strain>1021</strain>
    </source>
</reference>
<reference evidence="7" key="2">
    <citation type="journal article" date="2001" name="Science">
        <title>The composite genome of the legume symbiont Sinorhizobium meliloti.</title>
        <authorList>
            <person name="Galibert F."/>
            <person name="Finan T.M."/>
            <person name="Long S.R."/>
            <person name="Puehler A."/>
            <person name="Abola P."/>
            <person name="Ampe F."/>
            <person name="Barloy-Hubler F."/>
            <person name="Barnett M.J."/>
            <person name="Becker A."/>
            <person name="Boistard P."/>
            <person name="Bothe G."/>
            <person name="Boutry M."/>
            <person name="Bowser L."/>
            <person name="Buhrmester J."/>
            <person name="Cadieu E."/>
            <person name="Capela D."/>
            <person name="Chain P."/>
            <person name="Cowie A."/>
            <person name="Davis R.W."/>
            <person name="Dreano S."/>
            <person name="Federspiel N.A."/>
            <person name="Fisher R.F."/>
            <person name="Gloux S."/>
            <person name="Godrie T."/>
            <person name="Goffeau A."/>
            <person name="Golding B."/>
            <person name="Gouzy J."/>
            <person name="Gurjal M."/>
            <person name="Hernandez-Lucas I."/>
            <person name="Hong A."/>
            <person name="Huizar L."/>
            <person name="Hyman R.W."/>
            <person name="Jones T."/>
            <person name="Kahn D."/>
            <person name="Kahn M.L."/>
            <person name="Kalman S."/>
            <person name="Keating D.H."/>
            <person name="Kiss E."/>
            <person name="Komp C."/>
            <person name="Lelaure V."/>
            <person name="Masuy D."/>
            <person name="Palm C."/>
            <person name="Peck M.C."/>
            <person name="Pohl T.M."/>
            <person name="Portetelle D."/>
            <person name="Purnelle B."/>
            <person name="Ramsperger U."/>
            <person name="Surzycki R."/>
            <person name="Thebault P."/>
            <person name="Vandenbol M."/>
            <person name="Vorhoelter F.J."/>
            <person name="Weidner S."/>
            <person name="Wells D.H."/>
            <person name="Wong K."/>
            <person name="Yeh K.-C."/>
            <person name="Batut J."/>
        </authorList>
    </citation>
    <scope>NUCLEOTIDE SEQUENCE [LARGE SCALE GENOMIC DNA]</scope>
    <source>
        <strain>1021</strain>
    </source>
</reference>
<reference key="3">
    <citation type="journal article" date="2000" name="Gene">
        <title>The stachydrine catabolism region in Sinorhizobium meliloti encodes a multi-enzyme complex similar to the xenobiotic degrading systems in other bacteria.</title>
        <authorList>
            <person name="Burnet M.W."/>
            <person name="Goldmann A."/>
            <person name="Message B."/>
            <person name="Drong R."/>
            <person name="El Amrani A."/>
            <person name="Loreau O."/>
            <person name="Slightom J."/>
            <person name="Tepfer D."/>
        </authorList>
    </citation>
    <scope>FUNCTION</scope>
    <source>
        <strain>Sm2011 / Rm2011 / 2011</strain>
    </source>
</reference>
<reference key="4">
    <citation type="journal article" date="2012" name="J. Am. Chem. Soc.">
        <title>Quaternary ammonium oxidative demethylation: X-ray crystallographic, resonance Raman, and UV-visible spectroscopic analysis of a Rieske-type demethylase.</title>
        <authorList>
            <person name="Daughtry K.D."/>
            <person name="Xiao Y."/>
            <person name="Stoner-Ma D."/>
            <person name="Cho E."/>
            <person name="Orville A.M."/>
            <person name="Liu P."/>
            <person name="Allen K.N."/>
        </authorList>
    </citation>
    <scope>FUNCTION</scope>
    <source>
        <strain>1021</strain>
    </source>
</reference>
<protein>
    <recommendedName>
        <fullName evidence="4">Stachydrine N-demethylase reductase subunit Stc3</fullName>
        <ecNumber evidence="5 6">1.5.1.-</ecNumber>
    </recommendedName>
</protein>
<sequence>MKADVFDPRALREAFGAFPTAVTVITASDPAGRPVGFTANSFTSVSLDPPLLLVCVAKTARDYSTMTAAEHFAINILSEAQKDVSIKFARPLEDRFAAVDWARAPNGCPIFAQVAAWFECSMHDVIEAGDHVMMVGRVTAFKSSGLNGLGYARGGYFAPSVAAKANSSAAGGEIGAVAVLERHAALFPLGDQNLSLPRYSAAGGDPAKTLASQLERSGLSVHDWLSLLDL</sequence>
<proteinExistence type="inferred from homology"/>
<dbReference type="EC" id="1.5.1.-" evidence="5 6"/>
<dbReference type="EMBL" id="AE006469">
    <property type="protein sequence ID" value="AAK65060.1"/>
    <property type="molecule type" value="Genomic_DNA"/>
</dbReference>
<dbReference type="PIR" id="B95312">
    <property type="entry name" value="B95312"/>
</dbReference>
<dbReference type="RefSeq" id="NP_435648.1">
    <property type="nucleotide sequence ID" value="NC_003037.1"/>
</dbReference>
<dbReference type="RefSeq" id="WP_010967392.1">
    <property type="nucleotide sequence ID" value="NC_003037.1"/>
</dbReference>
<dbReference type="SMR" id="Q92ZP7"/>
<dbReference type="EnsemblBacteria" id="AAK65060">
    <property type="protein sequence ID" value="AAK65060"/>
    <property type="gene ID" value="SMa0753"/>
</dbReference>
<dbReference type="KEGG" id="sme:SMa0753"/>
<dbReference type="PATRIC" id="fig|266834.11.peg.419"/>
<dbReference type="HOGENOM" id="CLU_059021_1_0_5"/>
<dbReference type="OrthoDB" id="9792858at2"/>
<dbReference type="BioCyc" id="MetaCyc:MONOMER-2223"/>
<dbReference type="Proteomes" id="UP000001976">
    <property type="component" value="Plasmid pSymA"/>
</dbReference>
<dbReference type="GO" id="GO:0010181">
    <property type="term" value="F:FMN binding"/>
    <property type="evidence" value="ECO:0007669"/>
    <property type="project" value="InterPro"/>
</dbReference>
<dbReference type="GO" id="GO:0042602">
    <property type="term" value="F:riboflavin reductase (NADPH) activity"/>
    <property type="evidence" value="ECO:0007669"/>
    <property type="project" value="TreeGrafter"/>
</dbReference>
<dbReference type="Gene3D" id="2.30.110.10">
    <property type="entry name" value="Electron Transport, Fmn-binding Protein, Chain A"/>
    <property type="match status" value="1"/>
</dbReference>
<dbReference type="InterPro" id="IPR002563">
    <property type="entry name" value="Flavin_Rdtase-like_dom"/>
</dbReference>
<dbReference type="InterPro" id="IPR050268">
    <property type="entry name" value="NADH-dep_flavin_reductase"/>
</dbReference>
<dbReference type="InterPro" id="IPR012349">
    <property type="entry name" value="Split_barrel_FMN-bd"/>
</dbReference>
<dbReference type="PANTHER" id="PTHR30466">
    <property type="entry name" value="FLAVIN REDUCTASE"/>
    <property type="match status" value="1"/>
</dbReference>
<dbReference type="PANTHER" id="PTHR30466:SF1">
    <property type="entry name" value="FMN REDUCTASE (NADH) RUTF"/>
    <property type="match status" value="1"/>
</dbReference>
<dbReference type="Pfam" id="PF01613">
    <property type="entry name" value="Flavin_Reduct"/>
    <property type="match status" value="1"/>
</dbReference>
<dbReference type="SMART" id="SM00903">
    <property type="entry name" value="Flavin_Reduct"/>
    <property type="match status" value="1"/>
</dbReference>
<dbReference type="SUPFAM" id="SSF50475">
    <property type="entry name" value="FMN-binding split barrel"/>
    <property type="match status" value="1"/>
</dbReference>